<dbReference type="EMBL" id="AM711867">
    <property type="protein sequence ID" value="CAN01414.1"/>
    <property type="status" value="ALT_INIT"/>
    <property type="molecule type" value="Genomic_DNA"/>
</dbReference>
<dbReference type="RefSeq" id="WP_050976297.1">
    <property type="nucleotide sequence ID" value="NC_009480.1"/>
</dbReference>
<dbReference type="SMR" id="A5CQR0"/>
<dbReference type="GeneID" id="92947340"/>
<dbReference type="KEGG" id="cmi:CMM_1369"/>
<dbReference type="eggNOG" id="COG0806">
    <property type="taxonomic scope" value="Bacteria"/>
</dbReference>
<dbReference type="HOGENOM" id="CLU_077636_0_0_11"/>
<dbReference type="OrthoDB" id="5381335at2"/>
<dbReference type="Proteomes" id="UP000001564">
    <property type="component" value="Chromosome"/>
</dbReference>
<dbReference type="GO" id="GO:0005737">
    <property type="term" value="C:cytoplasm"/>
    <property type="evidence" value="ECO:0007669"/>
    <property type="project" value="UniProtKB-SubCell"/>
</dbReference>
<dbReference type="GO" id="GO:0005840">
    <property type="term" value="C:ribosome"/>
    <property type="evidence" value="ECO:0007669"/>
    <property type="project" value="InterPro"/>
</dbReference>
<dbReference type="GO" id="GO:0043022">
    <property type="term" value="F:ribosome binding"/>
    <property type="evidence" value="ECO:0007669"/>
    <property type="project" value="InterPro"/>
</dbReference>
<dbReference type="GO" id="GO:0042274">
    <property type="term" value="P:ribosomal small subunit biogenesis"/>
    <property type="evidence" value="ECO:0007669"/>
    <property type="project" value="UniProtKB-UniRule"/>
</dbReference>
<dbReference type="GO" id="GO:0006364">
    <property type="term" value="P:rRNA processing"/>
    <property type="evidence" value="ECO:0007669"/>
    <property type="project" value="UniProtKB-UniRule"/>
</dbReference>
<dbReference type="Gene3D" id="2.30.30.240">
    <property type="entry name" value="PRC-barrel domain"/>
    <property type="match status" value="1"/>
</dbReference>
<dbReference type="Gene3D" id="2.40.30.60">
    <property type="entry name" value="RimM"/>
    <property type="match status" value="1"/>
</dbReference>
<dbReference type="HAMAP" id="MF_00014">
    <property type="entry name" value="Ribosome_mat_RimM"/>
    <property type="match status" value="1"/>
</dbReference>
<dbReference type="InterPro" id="IPR011033">
    <property type="entry name" value="PRC_barrel-like_sf"/>
</dbReference>
<dbReference type="InterPro" id="IPR056792">
    <property type="entry name" value="PRC_RimM"/>
</dbReference>
<dbReference type="InterPro" id="IPR011961">
    <property type="entry name" value="RimM"/>
</dbReference>
<dbReference type="InterPro" id="IPR002676">
    <property type="entry name" value="RimM_N"/>
</dbReference>
<dbReference type="InterPro" id="IPR036976">
    <property type="entry name" value="RimM_N_sf"/>
</dbReference>
<dbReference type="InterPro" id="IPR009000">
    <property type="entry name" value="Transl_B-barrel_sf"/>
</dbReference>
<dbReference type="NCBIfam" id="TIGR02273">
    <property type="entry name" value="16S_RimM"/>
    <property type="match status" value="1"/>
</dbReference>
<dbReference type="PANTHER" id="PTHR33692">
    <property type="entry name" value="RIBOSOME MATURATION FACTOR RIMM"/>
    <property type="match status" value="1"/>
</dbReference>
<dbReference type="PANTHER" id="PTHR33692:SF1">
    <property type="entry name" value="RIBOSOME MATURATION FACTOR RIMM"/>
    <property type="match status" value="1"/>
</dbReference>
<dbReference type="Pfam" id="PF24986">
    <property type="entry name" value="PRC_RimM"/>
    <property type="match status" value="1"/>
</dbReference>
<dbReference type="Pfam" id="PF01782">
    <property type="entry name" value="RimM"/>
    <property type="match status" value="1"/>
</dbReference>
<dbReference type="SUPFAM" id="SSF50346">
    <property type="entry name" value="PRC-barrel domain"/>
    <property type="match status" value="1"/>
</dbReference>
<dbReference type="SUPFAM" id="SSF50447">
    <property type="entry name" value="Translation proteins"/>
    <property type="match status" value="1"/>
</dbReference>
<sequence>MWWTPIPEDIVRDPAAFRVGRLTKAHGLKGAVKLELFTDDPDKRFVPGAEFSLQVPESSPWHGRTLTLTELRWYNSHPVGFFDGVADRTAAESLAKAILWMTPPADEAAEPDAWYDHQLVGLTVLRDGVEVGTVSLVDHFPAQDLLHVDTPSGTVLVPFVQAIVPSVDVEAGTLVVTPPLGLFEEIPDETPTAEPTPAEAAEPAPEGDDAR</sequence>
<proteinExistence type="inferred from homology"/>
<organism>
    <name type="scientific">Clavibacter michiganensis subsp. michiganensis (strain NCPPB 382)</name>
    <dbReference type="NCBI Taxonomy" id="443906"/>
    <lineage>
        <taxon>Bacteria</taxon>
        <taxon>Bacillati</taxon>
        <taxon>Actinomycetota</taxon>
        <taxon>Actinomycetes</taxon>
        <taxon>Micrococcales</taxon>
        <taxon>Microbacteriaceae</taxon>
        <taxon>Clavibacter</taxon>
    </lineage>
</organism>
<protein>
    <recommendedName>
        <fullName evidence="1">Ribosome maturation factor RimM</fullName>
    </recommendedName>
</protein>
<accession>A5CQR0</accession>
<keyword id="KW-0143">Chaperone</keyword>
<keyword id="KW-0963">Cytoplasm</keyword>
<keyword id="KW-0690">Ribosome biogenesis</keyword>
<keyword id="KW-0698">rRNA processing</keyword>
<comment type="function">
    <text evidence="1">An accessory protein needed during the final step in the assembly of 30S ribosomal subunit, possibly for assembly of the head region. Essential for efficient processing of 16S rRNA. May be needed both before and after RbfA during the maturation of 16S rRNA. It has affinity for free ribosomal 30S subunits but not for 70S ribosomes.</text>
</comment>
<comment type="subunit">
    <text evidence="1">Binds ribosomal protein uS19.</text>
</comment>
<comment type="subcellular location">
    <subcellularLocation>
        <location evidence="1">Cytoplasm</location>
    </subcellularLocation>
</comment>
<comment type="domain">
    <text evidence="1">The PRC barrel domain binds ribosomal protein uS19.</text>
</comment>
<comment type="similarity">
    <text evidence="1">Belongs to the RimM family.</text>
</comment>
<comment type="sequence caution" evidence="3">
    <conflict type="erroneous initiation">
        <sequence resource="EMBL-CDS" id="CAN01414"/>
    </conflict>
</comment>
<reference key="1">
    <citation type="journal article" date="2008" name="J. Bacteriol.">
        <title>The genome sequence of the tomato-pathogenic actinomycete Clavibacter michiganensis subsp. michiganensis NCPPB382 reveals a large island involved in pathogenicity.</title>
        <authorList>
            <person name="Gartemann K.-H."/>
            <person name="Abt B."/>
            <person name="Bekel T."/>
            <person name="Burger A."/>
            <person name="Engemann J."/>
            <person name="Fluegel M."/>
            <person name="Gaigalat L."/>
            <person name="Goesmann A."/>
            <person name="Graefen I."/>
            <person name="Kalinowski J."/>
            <person name="Kaup O."/>
            <person name="Kirchner O."/>
            <person name="Krause L."/>
            <person name="Linke B."/>
            <person name="McHardy A."/>
            <person name="Meyer F."/>
            <person name="Pohle S."/>
            <person name="Rueckert C."/>
            <person name="Schneiker S."/>
            <person name="Zellermann E.-M."/>
            <person name="Puehler A."/>
            <person name="Eichenlaub R."/>
            <person name="Kaiser O."/>
            <person name="Bartels D."/>
        </authorList>
    </citation>
    <scope>NUCLEOTIDE SEQUENCE [LARGE SCALE GENOMIC DNA]</scope>
    <source>
        <strain>NCPPB 382</strain>
    </source>
</reference>
<gene>
    <name evidence="1" type="primary">rimM</name>
    <name type="ordered locus">CMM_1369</name>
</gene>
<name>RIMM_CLAM3</name>
<feature type="chain" id="PRO_0000351747" description="Ribosome maturation factor RimM">
    <location>
        <begin position="1"/>
        <end position="211"/>
    </location>
</feature>
<feature type="domain" description="PRC barrel" evidence="1">
    <location>
        <begin position="111"/>
        <end position="182"/>
    </location>
</feature>
<feature type="region of interest" description="Disordered" evidence="2">
    <location>
        <begin position="184"/>
        <end position="211"/>
    </location>
</feature>
<feature type="compositionally biased region" description="Low complexity" evidence="2">
    <location>
        <begin position="189"/>
        <end position="204"/>
    </location>
</feature>
<evidence type="ECO:0000255" key="1">
    <source>
        <dbReference type="HAMAP-Rule" id="MF_00014"/>
    </source>
</evidence>
<evidence type="ECO:0000256" key="2">
    <source>
        <dbReference type="SAM" id="MobiDB-lite"/>
    </source>
</evidence>
<evidence type="ECO:0000305" key="3"/>